<evidence type="ECO:0000250" key="1"/>
<evidence type="ECO:0000250" key="2">
    <source>
        <dbReference type="UniProtKB" id="P36941"/>
    </source>
</evidence>
<evidence type="ECO:0000255" key="3"/>
<evidence type="ECO:0000255" key="4">
    <source>
        <dbReference type="PROSITE-ProRule" id="PRU00206"/>
    </source>
</evidence>
<evidence type="ECO:0000256" key="5">
    <source>
        <dbReference type="SAM" id="MobiDB-lite"/>
    </source>
</evidence>
<evidence type="ECO:0000269" key="6">
    <source>
    </source>
</evidence>
<evidence type="ECO:0000269" key="7">
    <source>
    </source>
</evidence>
<sequence length="415" mass="44956">MRLPRASSPCGLAWGPLLLGLSGLLVASQPQLVPPYRIENQTCWDQDKEYYEPMHDVCCSRCPPGEFVFAVCSRSQDTVCKTCPHNSYNEHWNHLSTCQLCRPCDIVLGFEEVAPCTSDRKAECRCQPGMSCVYLDNECVHCEEERLVLCQPGTEAEVTDEIMDTDVNCVPCKPGHFQNTSSPRARCQPHTRCEIQGLVEAAPGTSYSDTICKNPPEPGAMLLLAILLSLVLFLLFTTVLACAWMRHPSLCRKLGTLLKRHPEGEESPPCPAPRADPHFPDLAEPLLPMSGDLSPSPAGPPTAPSLEEVVLQQQSPLVQARELEAEPGEHGQVAHGANGIHVTGGSVTVTGNIYIYNGPVLGGTRGPGDPPAPPEPPYPTPEEGAPGPSELSTPYQEDGKAWHLAETETLGCQDL</sequence>
<comment type="function">
    <text evidence="1 2">Receptor for the heterotrimeric lymphotoxin containing LTA and LTB, and for TNFS14/LIGHT. Activates NF-kappa-B signaling upon stimulation with lymphotoxin. Promotes apoptosis via TRAF3 and TRAF5. May play a role in the development of lymphoid organs.</text>
</comment>
<comment type="function">
    <text evidence="6">(Microbial infection) Plays a role in host defense against Zika virus infection.</text>
</comment>
<comment type="subunit">
    <text evidence="1 2 6 7">Self-associates; dimerization and trimerization are promoted by lymphotoxin (LTA(3)) (PubMed:29507355). Associates with TRAF3 (By similarity). Associates with TRAF4 (By similarity). Associates with TRAF5 (PubMed:8663299).</text>
</comment>
<comment type="interaction">
    <interactant intactId="EBI-647023">
        <id>P50284</id>
    </interactant>
    <interactant intactId="EBI-520016">
        <id>P39429</id>
        <label>Traf2</label>
    </interactant>
    <organismsDiffer>false</organismsDiffer>
    <experiments>3</experiments>
</comment>
<comment type="interaction">
    <interactant intactId="EBI-647023">
        <id>P50284</id>
    </interactant>
    <interactant intactId="EBI-524131">
        <id>O43557</id>
        <label>TNFSF14</label>
    </interactant>
    <organismsDiffer>true</organismsDiffer>
    <experiments>2</experiments>
</comment>
<comment type="subcellular location">
    <subcellularLocation>
        <location>Membrane</location>
        <topology>Single-pass type I membrane protein</topology>
    </subcellularLocation>
</comment>
<comment type="miscellaneous">
    <text evidence="6">Aedes aegypti lymphotoxin beta receptor inhibitor reduces dimerization and trimerization of LTBR induced by lymphotoxin (LTA(3)).</text>
</comment>
<organism>
    <name type="scientific">Mus musculus</name>
    <name type="common">Mouse</name>
    <dbReference type="NCBI Taxonomy" id="10090"/>
    <lineage>
        <taxon>Eukaryota</taxon>
        <taxon>Metazoa</taxon>
        <taxon>Chordata</taxon>
        <taxon>Craniata</taxon>
        <taxon>Vertebrata</taxon>
        <taxon>Euteleostomi</taxon>
        <taxon>Mammalia</taxon>
        <taxon>Eutheria</taxon>
        <taxon>Euarchontoglires</taxon>
        <taxon>Glires</taxon>
        <taxon>Rodentia</taxon>
        <taxon>Myomorpha</taxon>
        <taxon>Muroidea</taxon>
        <taxon>Muridae</taxon>
        <taxon>Murinae</taxon>
        <taxon>Mus</taxon>
        <taxon>Mus</taxon>
    </lineage>
</organism>
<name>TNR3_MOUSE</name>
<keyword id="KW-0053">Apoptosis</keyword>
<keyword id="KW-1015">Disulfide bond</keyword>
<keyword id="KW-0325">Glycoprotein</keyword>
<keyword id="KW-0472">Membrane</keyword>
<keyword id="KW-0597">Phosphoprotein</keyword>
<keyword id="KW-0675">Receptor</keyword>
<keyword id="KW-1185">Reference proteome</keyword>
<keyword id="KW-0677">Repeat</keyword>
<keyword id="KW-0732">Signal</keyword>
<keyword id="KW-0812">Transmembrane</keyword>
<keyword id="KW-1133">Transmembrane helix</keyword>
<accession>P50284</accession>
<reference key="1">
    <citation type="journal article" date="1995" name="J. Immunol.">
        <title>Mouse lymphotoxin-beta receptor. Molecular genetics, ligand binding, and expression.</title>
        <authorList>
            <person name="Force W.R."/>
            <person name="Walter B.N."/>
            <person name="Hession C."/>
            <person name="Tizard R."/>
            <person name="Kozak C.A."/>
            <person name="Browning J.L."/>
            <person name="Ware C.F."/>
        </authorList>
    </citation>
    <scope>NUCLEOTIDE SEQUENCE [MRNA]</scope>
    <source>
        <strain>CVB</strain>
        <tissue>Lung</tissue>
    </source>
</reference>
<reference key="2">
    <citation type="journal article" date="1995" name="Genomics">
        <title>The murine lymphotoxin-beta receptor cDNA: isolation by the signal sequence trap and chromosomal mapping.</title>
        <authorList>
            <person name="Nakamura T."/>
            <person name="Tashiro K."/>
            <person name="Nazarea M."/>
            <person name="Nakano T."/>
            <person name="Sasayama S."/>
            <person name="Honjo T."/>
        </authorList>
    </citation>
    <scope>NUCLEOTIDE SEQUENCE [MRNA]</scope>
</reference>
<reference key="3">
    <citation type="journal article" date="1996" name="J. Biol. Chem.">
        <title>TRAF5, an activator of NF-kappaB and putative signal transducer for the lymphotoxin-beta receptor.</title>
        <authorList>
            <person name="Nakano H."/>
            <person name="Oshima H."/>
            <person name="Chung W."/>
            <person name="Williams-Abbott L."/>
            <person name="Ware C.F."/>
            <person name="Yagita H."/>
            <person name="Okumura K."/>
        </authorList>
    </citation>
    <scope>INTERACTION WITH TRAF5</scope>
    <source>
        <strain>BALB/cJ</strain>
    </source>
</reference>
<reference key="4">
    <citation type="journal article" date="2018" name="Nat. Immunol.">
        <title>Salivary factor LTRIN from Aedes aegypti facilitates the transmission of Zika virus by interfering with the lymphotoxin-beta receptor.</title>
        <authorList>
            <person name="Jin L."/>
            <person name="Guo X."/>
            <person name="Shen C."/>
            <person name="Hao X."/>
            <person name="Sun P."/>
            <person name="Li P."/>
            <person name="Xu T."/>
            <person name="Hu C."/>
            <person name="Rose O."/>
            <person name="Zhou H."/>
            <person name="Yang M."/>
            <person name="Qin C.F."/>
            <person name="Guo J."/>
            <person name="Peng H."/>
            <person name="Zhu M."/>
            <person name="Cheng G."/>
            <person name="Qi X."/>
            <person name="Lai R."/>
        </authorList>
    </citation>
    <scope>FUNCTION (MICROBIAL INFECTION)</scope>
    <scope>SUBUNIT</scope>
</reference>
<feature type="signal peptide" evidence="3">
    <location>
        <begin position="1"/>
        <end position="30"/>
    </location>
</feature>
<feature type="chain" id="PRO_0000034553" description="Tumor necrosis factor receptor superfamily member 3">
    <location>
        <begin position="31"/>
        <end position="415"/>
    </location>
</feature>
<feature type="topological domain" description="Extracellular" evidence="3">
    <location>
        <begin position="31"/>
        <end position="223"/>
    </location>
</feature>
<feature type="transmembrane region" description="Helical" evidence="3">
    <location>
        <begin position="224"/>
        <end position="244"/>
    </location>
</feature>
<feature type="topological domain" description="Cytoplasmic" evidence="3">
    <location>
        <begin position="245"/>
        <end position="415"/>
    </location>
</feature>
<feature type="repeat" description="TNFR-Cys 1">
    <location>
        <begin position="42"/>
        <end position="81"/>
    </location>
</feature>
<feature type="repeat" description="TNFR-Cys 2">
    <location>
        <begin position="82"/>
        <end position="124"/>
    </location>
</feature>
<feature type="repeat" description="TNFR-Cys 3">
    <location>
        <begin position="125"/>
        <end position="170"/>
    </location>
</feature>
<feature type="repeat" description="TNFR-Cys 4">
    <location>
        <begin position="171"/>
        <end position="213"/>
    </location>
</feature>
<feature type="region of interest" description="Disordered" evidence="5">
    <location>
        <begin position="261"/>
        <end position="304"/>
    </location>
</feature>
<feature type="region of interest" description="Disordered" evidence="5">
    <location>
        <begin position="361"/>
        <end position="399"/>
    </location>
</feature>
<feature type="compositionally biased region" description="Pro residues" evidence="5">
    <location>
        <begin position="368"/>
        <end position="380"/>
    </location>
</feature>
<feature type="modified residue" description="Phosphoserine" evidence="2">
    <location>
        <position position="315"/>
    </location>
</feature>
<feature type="glycosylation site" description="N-linked (GlcNAc...) asparagine" evidence="3">
    <location>
        <position position="40"/>
    </location>
</feature>
<feature type="glycosylation site" description="N-linked (GlcNAc...) asparagine" evidence="3">
    <location>
        <position position="179"/>
    </location>
</feature>
<feature type="disulfide bond" evidence="4">
    <location>
        <begin position="43"/>
        <end position="58"/>
    </location>
</feature>
<feature type="disulfide bond" evidence="4">
    <location>
        <begin position="59"/>
        <end position="72"/>
    </location>
</feature>
<feature type="disulfide bond" evidence="4">
    <location>
        <begin position="62"/>
        <end position="80"/>
    </location>
</feature>
<feature type="disulfide bond" evidence="4">
    <location>
        <begin position="83"/>
        <end position="98"/>
    </location>
</feature>
<feature type="disulfide bond" evidence="4">
    <location>
        <begin position="101"/>
        <end position="116"/>
    </location>
</feature>
<feature type="disulfide bond" evidence="4">
    <location>
        <begin position="104"/>
        <end position="124"/>
    </location>
</feature>
<feature type="disulfide bond" evidence="4">
    <location>
        <begin position="126"/>
        <end position="132"/>
    </location>
</feature>
<feature type="disulfide bond" evidence="4">
    <location>
        <begin position="139"/>
        <end position="150"/>
    </location>
</feature>
<feature type="disulfide bond" evidence="4">
    <location>
        <begin position="142"/>
        <end position="169"/>
    </location>
</feature>
<feature type="disulfide bond" evidence="4">
    <location>
        <begin position="172"/>
        <end position="187"/>
    </location>
</feature>
<proteinExistence type="evidence at protein level"/>
<dbReference type="EMBL" id="U29173">
    <property type="protein sequence ID" value="AAA68964.1"/>
    <property type="molecule type" value="mRNA"/>
</dbReference>
<dbReference type="EMBL" id="L38423">
    <property type="protein sequence ID" value="AAB00846.1"/>
    <property type="molecule type" value="mRNA"/>
</dbReference>
<dbReference type="EMBL" id="U30798">
    <property type="protein sequence ID" value="AAA81334.1"/>
    <property type="molecule type" value="Genomic_DNA"/>
</dbReference>
<dbReference type="CCDS" id="CCDS20549.1"/>
<dbReference type="RefSeq" id="NP_034866.1">
    <property type="nucleotide sequence ID" value="NM_010736.5"/>
</dbReference>
<dbReference type="SMR" id="P50284"/>
<dbReference type="BioGRID" id="201222">
    <property type="interactions" value="5"/>
</dbReference>
<dbReference type="DIP" id="DIP-49695N"/>
<dbReference type="FunCoup" id="P50284">
    <property type="interactions" value="1003"/>
</dbReference>
<dbReference type="IntAct" id="P50284">
    <property type="interactions" value="7"/>
</dbReference>
<dbReference type="STRING" id="10090.ENSMUSP00000032489"/>
<dbReference type="GlyCosmos" id="P50284">
    <property type="glycosylation" value="2 sites, No reported glycans"/>
</dbReference>
<dbReference type="GlyGen" id="P50284">
    <property type="glycosylation" value="3 sites"/>
</dbReference>
<dbReference type="PhosphoSitePlus" id="P50284"/>
<dbReference type="PaxDb" id="10090-ENSMUSP00000032489"/>
<dbReference type="ProteomicsDB" id="258811"/>
<dbReference type="Antibodypedia" id="10740">
    <property type="antibodies" value="912 antibodies from 37 providers"/>
</dbReference>
<dbReference type="DNASU" id="17000"/>
<dbReference type="Ensembl" id="ENSMUST00000032489.8">
    <property type="protein sequence ID" value="ENSMUSP00000032489.8"/>
    <property type="gene ID" value="ENSMUSG00000030339.8"/>
</dbReference>
<dbReference type="GeneID" id="17000"/>
<dbReference type="KEGG" id="mmu:17000"/>
<dbReference type="UCSC" id="uc009duj.1">
    <property type="organism name" value="mouse"/>
</dbReference>
<dbReference type="AGR" id="MGI:104875"/>
<dbReference type="CTD" id="4055"/>
<dbReference type="MGI" id="MGI:104875">
    <property type="gene designation" value="Ltbr"/>
</dbReference>
<dbReference type="VEuPathDB" id="HostDB:ENSMUSG00000030339"/>
<dbReference type="eggNOG" id="ENOG502S4WF">
    <property type="taxonomic scope" value="Eukaryota"/>
</dbReference>
<dbReference type="GeneTree" id="ENSGT00940000162178"/>
<dbReference type="HOGENOM" id="CLU_052594_0_0_1"/>
<dbReference type="InParanoid" id="P50284"/>
<dbReference type="OMA" id="NNCVPCK"/>
<dbReference type="OrthoDB" id="10031141at2759"/>
<dbReference type="PhylomeDB" id="P50284"/>
<dbReference type="TreeFam" id="TF331157"/>
<dbReference type="Reactome" id="R-MMU-5668541">
    <property type="pathway name" value="TNFR2 non-canonical NF-kB pathway"/>
</dbReference>
<dbReference type="Reactome" id="R-MMU-5676594">
    <property type="pathway name" value="TNF receptor superfamily (TNFSF) members mediating non-canonical NF-kB pathway"/>
</dbReference>
<dbReference type="BioGRID-ORCS" id="17000">
    <property type="hits" value="2 hits in 81 CRISPR screens"/>
</dbReference>
<dbReference type="ChiTaRS" id="Ltbr">
    <property type="organism name" value="mouse"/>
</dbReference>
<dbReference type="PRO" id="PR:P50284"/>
<dbReference type="Proteomes" id="UP000000589">
    <property type="component" value="Chromosome 6"/>
</dbReference>
<dbReference type="RNAct" id="P50284">
    <property type="molecule type" value="protein"/>
</dbReference>
<dbReference type="Bgee" id="ENSMUSG00000030339">
    <property type="expression patterns" value="Expressed in granulocyte and 217 other cell types or tissues"/>
</dbReference>
<dbReference type="ExpressionAtlas" id="P50284">
    <property type="expression patterns" value="baseline and differential"/>
</dbReference>
<dbReference type="GO" id="GO:0005794">
    <property type="term" value="C:Golgi apparatus"/>
    <property type="evidence" value="ECO:0007669"/>
    <property type="project" value="Ensembl"/>
</dbReference>
<dbReference type="GO" id="GO:0005886">
    <property type="term" value="C:plasma membrane"/>
    <property type="evidence" value="ECO:0000304"/>
    <property type="project" value="Reactome"/>
</dbReference>
<dbReference type="GO" id="GO:0042802">
    <property type="term" value="F:identical protein binding"/>
    <property type="evidence" value="ECO:0007669"/>
    <property type="project" value="Ensembl"/>
</dbReference>
<dbReference type="GO" id="GO:0031625">
    <property type="term" value="F:ubiquitin protein ligase binding"/>
    <property type="evidence" value="ECO:0007669"/>
    <property type="project" value="Ensembl"/>
</dbReference>
<dbReference type="GO" id="GO:0006915">
    <property type="term" value="P:apoptotic process"/>
    <property type="evidence" value="ECO:0007669"/>
    <property type="project" value="UniProtKB-KW"/>
</dbReference>
<dbReference type="GO" id="GO:0071260">
    <property type="term" value="P:cellular response to mechanical stimulus"/>
    <property type="evidence" value="ECO:0007669"/>
    <property type="project" value="Ensembl"/>
</dbReference>
<dbReference type="GO" id="GO:0006955">
    <property type="term" value="P:immune response"/>
    <property type="evidence" value="ECO:0007669"/>
    <property type="project" value="InterPro"/>
</dbReference>
<dbReference type="GO" id="GO:0048535">
    <property type="term" value="P:lymph node development"/>
    <property type="evidence" value="ECO:0000304"/>
    <property type="project" value="MGI"/>
</dbReference>
<dbReference type="GO" id="GO:0043011">
    <property type="term" value="P:myeloid dendritic cell differentiation"/>
    <property type="evidence" value="ECO:0000315"/>
    <property type="project" value="MGI"/>
</dbReference>
<dbReference type="GO" id="GO:0043123">
    <property type="term" value="P:positive regulation of canonical NF-kappaB signal transduction"/>
    <property type="evidence" value="ECO:0007669"/>
    <property type="project" value="Ensembl"/>
</dbReference>
<dbReference type="GO" id="GO:2001238">
    <property type="term" value="P:positive regulation of extrinsic apoptotic signaling pathway"/>
    <property type="evidence" value="ECO:0007669"/>
    <property type="project" value="Ensembl"/>
</dbReference>
<dbReference type="GO" id="GO:0046330">
    <property type="term" value="P:positive regulation of JNK cascade"/>
    <property type="evidence" value="ECO:0007669"/>
    <property type="project" value="Ensembl"/>
</dbReference>
<dbReference type="CDD" id="cd10578">
    <property type="entry name" value="TNFRSF3"/>
    <property type="match status" value="1"/>
</dbReference>
<dbReference type="FunFam" id="2.10.50.10:FF:000079">
    <property type="entry name" value="tumor necrosis factor receptor superfamily member 3"/>
    <property type="match status" value="1"/>
</dbReference>
<dbReference type="Gene3D" id="2.10.50.10">
    <property type="entry name" value="Tumor Necrosis Factor Receptor, subunit A, domain 2"/>
    <property type="match status" value="2"/>
</dbReference>
<dbReference type="InterPro" id="IPR001368">
    <property type="entry name" value="TNFR/NGFR_Cys_rich_reg"/>
</dbReference>
<dbReference type="InterPro" id="IPR017349">
    <property type="entry name" value="TNFR_3_LTBR"/>
</dbReference>
<dbReference type="InterPro" id="IPR033997">
    <property type="entry name" value="TNFRSF3_N"/>
</dbReference>
<dbReference type="PANTHER" id="PTHR47607">
    <property type="entry name" value="TUMOR NECROSIS FACTOR RECEPTOR SUBFAMILY MEMBER 3"/>
    <property type="match status" value="1"/>
</dbReference>
<dbReference type="PANTHER" id="PTHR47607:SF1">
    <property type="entry name" value="TUMOR NECROSIS FACTOR RECEPTOR SUPERFAMILY MEMBER 3"/>
    <property type="match status" value="1"/>
</dbReference>
<dbReference type="Pfam" id="PF00020">
    <property type="entry name" value="TNFR_c6"/>
    <property type="match status" value="3"/>
</dbReference>
<dbReference type="PIRSF" id="PIRSF037999">
    <property type="entry name" value="TNFR_3_LTBR"/>
    <property type="match status" value="1"/>
</dbReference>
<dbReference type="PRINTS" id="PR01920">
    <property type="entry name" value="TNFACTORR3"/>
</dbReference>
<dbReference type="SMART" id="SM00208">
    <property type="entry name" value="TNFR"/>
    <property type="match status" value="3"/>
</dbReference>
<dbReference type="SUPFAM" id="SSF57586">
    <property type="entry name" value="TNF receptor-like"/>
    <property type="match status" value="2"/>
</dbReference>
<dbReference type="PROSITE" id="PS00652">
    <property type="entry name" value="TNFR_NGFR_1"/>
    <property type="match status" value="2"/>
</dbReference>
<dbReference type="PROSITE" id="PS50050">
    <property type="entry name" value="TNFR_NGFR_2"/>
    <property type="match status" value="3"/>
</dbReference>
<protein>
    <recommendedName>
        <fullName>Tumor necrosis factor receptor superfamily member 3</fullName>
    </recommendedName>
    <alternativeName>
        <fullName>Lymphotoxin-beta receptor</fullName>
    </alternativeName>
</protein>
<gene>
    <name type="primary">Ltbr</name>
    <name type="synonym">Tnfcr</name>
    <name type="synonym">Tnfrsf3</name>
</gene>